<evidence type="ECO:0000255" key="1">
    <source>
        <dbReference type="HAMAP-Rule" id="MF_00151"/>
    </source>
</evidence>
<comment type="function">
    <text evidence="1">Reversibly transfers an adenylyl group from ATP to 4'-phosphopantetheine, yielding dephospho-CoA (dPCoA) and pyrophosphate.</text>
</comment>
<comment type="catalytic activity">
    <reaction evidence="1">
        <text>(R)-4'-phosphopantetheine + ATP + H(+) = 3'-dephospho-CoA + diphosphate</text>
        <dbReference type="Rhea" id="RHEA:19801"/>
        <dbReference type="ChEBI" id="CHEBI:15378"/>
        <dbReference type="ChEBI" id="CHEBI:30616"/>
        <dbReference type="ChEBI" id="CHEBI:33019"/>
        <dbReference type="ChEBI" id="CHEBI:57328"/>
        <dbReference type="ChEBI" id="CHEBI:61723"/>
        <dbReference type="EC" id="2.7.7.3"/>
    </reaction>
</comment>
<comment type="cofactor">
    <cofactor evidence="1">
        <name>Mg(2+)</name>
        <dbReference type="ChEBI" id="CHEBI:18420"/>
    </cofactor>
</comment>
<comment type="pathway">
    <text evidence="1">Cofactor biosynthesis; coenzyme A biosynthesis; CoA from (R)-pantothenate: step 4/5.</text>
</comment>
<comment type="subunit">
    <text evidence="1">Homohexamer.</text>
</comment>
<comment type="subcellular location">
    <subcellularLocation>
        <location evidence="1">Cytoplasm</location>
    </subcellularLocation>
</comment>
<comment type="similarity">
    <text evidence="1">Belongs to the bacterial CoaD family.</text>
</comment>
<keyword id="KW-0067">ATP-binding</keyword>
<keyword id="KW-0173">Coenzyme A biosynthesis</keyword>
<keyword id="KW-0963">Cytoplasm</keyword>
<keyword id="KW-0460">Magnesium</keyword>
<keyword id="KW-0547">Nucleotide-binding</keyword>
<keyword id="KW-0548">Nucleotidyltransferase</keyword>
<keyword id="KW-1185">Reference proteome</keyword>
<keyword id="KW-0808">Transferase</keyword>
<accession>Q5HQ42</accession>
<dbReference type="EC" id="2.7.7.3" evidence="1"/>
<dbReference type="EMBL" id="CP000029">
    <property type="protein sequence ID" value="AAW54073.1"/>
    <property type="molecule type" value="Genomic_DNA"/>
</dbReference>
<dbReference type="RefSeq" id="WP_001830072.1">
    <property type="nucleotide sequence ID" value="NC_002976.3"/>
</dbReference>
<dbReference type="SMR" id="Q5HQ42"/>
<dbReference type="STRING" id="176279.SERP0715"/>
<dbReference type="GeneID" id="50019037"/>
<dbReference type="KEGG" id="ser:SERP0715"/>
<dbReference type="eggNOG" id="COG0669">
    <property type="taxonomic scope" value="Bacteria"/>
</dbReference>
<dbReference type="HOGENOM" id="CLU_100149_0_1_9"/>
<dbReference type="UniPathway" id="UPA00241">
    <property type="reaction ID" value="UER00355"/>
</dbReference>
<dbReference type="Proteomes" id="UP000000531">
    <property type="component" value="Chromosome"/>
</dbReference>
<dbReference type="GO" id="GO:0005737">
    <property type="term" value="C:cytoplasm"/>
    <property type="evidence" value="ECO:0007669"/>
    <property type="project" value="UniProtKB-SubCell"/>
</dbReference>
<dbReference type="GO" id="GO:0005524">
    <property type="term" value="F:ATP binding"/>
    <property type="evidence" value="ECO:0007669"/>
    <property type="project" value="UniProtKB-KW"/>
</dbReference>
<dbReference type="GO" id="GO:0004595">
    <property type="term" value="F:pantetheine-phosphate adenylyltransferase activity"/>
    <property type="evidence" value="ECO:0007669"/>
    <property type="project" value="UniProtKB-UniRule"/>
</dbReference>
<dbReference type="GO" id="GO:0015937">
    <property type="term" value="P:coenzyme A biosynthetic process"/>
    <property type="evidence" value="ECO:0007669"/>
    <property type="project" value="UniProtKB-UniRule"/>
</dbReference>
<dbReference type="CDD" id="cd02163">
    <property type="entry name" value="PPAT"/>
    <property type="match status" value="1"/>
</dbReference>
<dbReference type="Gene3D" id="3.40.50.620">
    <property type="entry name" value="HUPs"/>
    <property type="match status" value="1"/>
</dbReference>
<dbReference type="HAMAP" id="MF_00151">
    <property type="entry name" value="PPAT_bact"/>
    <property type="match status" value="1"/>
</dbReference>
<dbReference type="InterPro" id="IPR004821">
    <property type="entry name" value="Cyt_trans-like"/>
</dbReference>
<dbReference type="InterPro" id="IPR001980">
    <property type="entry name" value="PPAT"/>
</dbReference>
<dbReference type="InterPro" id="IPR014729">
    <property type="entry name" value="Rossmann-like_a/b/a_fold"/>
</dbReference>
<dbReference type="NCBIfam" id="TIGR01510">
    <property type="entry name" value="coaD_prev_kdtB"/>
    <property type="match status" value="1"/>
</dbReference>
<dbReference type="NCBIfam" id="TIGR00125">
    <property type="entry name" value="cyt_tran_rel"/>
    <property type="match status" value="1"/>
</dbReference>
<dbReference type="PANTHER" id="PTHR21342">
    <property type="entry name" value="PHOSPHOPANTETHEINE ADENYLYLTRANSFERASE"/>
    <property type="match status" value="1"/>
</dbReference>
<dbReference type="PANTHER" id="PTHR21342:SF1">
    <property type="entry name" value="PHOSPHOPANTETHEINE ADENYLYLTRANSFERASE"/>
    <property type="match status" value="1"/>
</dbReference>
<dbReference type="Pfam" id="PF01467">
    <property type="entry name" value="CTP_transf_like"/>
    <property type="match status" value="1"/>
</dbReference>
<dbReference type="PRINTS" id="PR01020">
    <property type="entry name" value="LPSBIOSNTHSS"/>
</dbReference>
<dbReference type="SUPFAM" id="SSF52374">
    <property type="entry name" value="Nucleotidylyl transferase"/>
    <property type="match status" value="1"/>
</dbReference>
<protein>
    <recommendedName>
        <fullName evidence="1">Phosphopantetheine adenylyltransferase</fullName>
        <ecNumber evidence="1">2.7.7.3</ecNumber>
    </recommendedName>
    <alternativeName>
        <fullName evidence="1">Dephospho-CoA pyrophosphorylase</fullName>
    </alternativeName>
    <alternativeName>
        <fullName evidence="1">Pantetheine-phosphate adenylyltransferase</fullName>
        <shortName evidence="1">PPAT</shortName>
    </alternativeName>
</protein>
<name>COAD_STAEQ</name>
<sequence length="161" mass="18216">MSKTRAVIPGSFDPITYGHLDIIERSADRFDEIHVCVLKNSSKGGTFDSEERMTLIEESVKHLPNIQVHHFNGLLVDFCDQVGAKTIIRGLRAVSDFEYELRLTSMNKKLNSNIETMYMMTSANYSFISSSIVKEVAAYQADISPFVPPHVERALKKKFNV</sequence>
<gene>
    <name evidence="1" type="primary">coaD</name>
    <name type="ordered locus">SERP0715</name>
</gene>
<reference key="1">
    <citation type="journal article" date="2005" name="J. Bacteriol.">
        <title>Insights on evolution of virulence and resistance from the complete genome analysis of an early methicillin-resistant Staphylococcus aureus strain and a biofilm-producing methicillin-resistant Staphylococcus epidermidis strain.</title>
        <authorList>
            <person name="Gill S.R."/>
            <person name="Fouts D.E."/>
            <person name="Archer G.L."/>
            <person name="Mongodin E.F."/>
            <person name="DeBoy R.T."/>
            <person name="Ravel J."/>
            <person name="Paulsen I.T."/>
            <person name="Kolonay J.F."/>
            <person name="Brinkac L.M."/>
            <person name="Beanan M.J."/>
            <person name="Dodson R.J."/>
            <person name="Daugherty S.C."/>
            <person name="Madupu R."/>
            <person name="Angiuoli S.V."/>
            <person name="Durkin A.S."/>
            <person name="Haft D.H."/>
            <person name="Vamathevan J.J."/>
            <person name="Khouri H."/>
            <person name="Utterback T.R."/>
            <person name="Lee C."/>
            <person name="Dimitrov G."/>
            <person name="Jiang L."/>
            <person name="Qin H."/>
            <person name="Weidman J."/>
            <person name="Tran K."/>
            <person name="Kang K.H."/>
            <person name="Hance I.R."/>
            <person name="Nelson K.E."/>
            <person name="Fraser C.M."/>
        </authorList>
    </citation>
    <scope>NUCLEOTIDE SEQUENCE [LARGE SCALE GENOMIC DNA]</scope>
    <source>
        <strain>ATCC 35984 / DSM 28319 / BCRC 17069 / CCUG 31568 / BM 3577 / RP62A</strain>
    </source>
</reference>
<organism>
    <name type="scientific">Staphylococcus epidermidis (strain ATCC 35984 / DSM 28319 / BCRC 17069 / CCUG 31568 / BM 3577 / RP62A)</name>
    <dbReference type="NCBI Taxonomy" id="176279"/>
    <lineage>
        <taxon>Bacteria</taxon>
        <taxon>Bacillati</taxon>
        <taxon>Bacillota</taxon>
        <taxon>Bacilli</taxon>
        <taxon>Bacillales</taxon>
        <taxon>Staphylococcaceae</taxon>
        <taxon>Staphylococcus</taxon>
    </lineage>
</organism>
<feature type="chain" id="PRO_0000156278" description="Phosphopantetheine adenylyltransferase">
    <location>
        <begin position="1"/>
        <end position="161"/>
    </location>
</feature>
<feature type="binding site" evidence="1">
    <location>
        <begin position="11"/>
        <end position="12"/>
    </location>
    <ligand>
        <name>ATP</name>
        <dbReference type="ChEBI" id="CHEBI:30616"/>
    </ligand>
</feature>
<feature type="binding site" evidence="1">
    <location>
        <position position="11"/>
    </location>
    <ligand>
        <name>substrate</name>
    </ligand>
</feature>
<feature type="binding site" evidence="1">
    <location>
        <position position="19"/>
    </location>
    <ligand>
        <name>ATP</name>
        <dbReference type="ChEBI" id="CHEBI:30616"/>
    </ligand>
</feature>
<feature type="binding site" evidence="1">
    <location>
        <position position="43"/>
    </location>
    <ligand>
        <name>substrate</name>
    </ligand>
</feature>
<feature type="binding site" evidence="1">
    <location>
        <position position="75"/>
    </location>
    <ligand>
        <name>substrate</name>
    </ligand>
</feature>
<feature type="binding site" evidence="1">
    <location>
        <position position="89"/>
    </location>
    <ligand>
        <name>substrate</name>
    </ligand>
</feature>
<feature type="binding site" evidence="1">
    <location>
        <begin position="90"/>
        <end position="92"/>
    </location>
    <ligand>
        <name>ATP</name>
        <dbReference type="ChEBI" id="CHEBI:30616"/>
    </ligand>
</feature>
<feature type="binding site" evidence="1">
    <location>
        <position position="100"/>
    </location>
    <ligand>
        <name>ATP</name>
        <dbReference type="ChEBI" id="CHEBI:30616"/>
    </ligand>
</feature>
<feature type="binding site" evidence="1">
    <location>
        <begin position="125"/>
        <end position="131"/>
    </location>
    <ligand>
        <name>ATP</name>
        <dbReference type="ChEBI" id="CHEBI:30616"/>
    </ligand>
</feature>
<feature type="site" description="Transition state stabilizer" evidence="1">
    <location>
        <position position="19"/>
    </location>
</feature>
<proteinExistence type="inferred from homology"/>